<reference key="1">
    <citation type="journal article" date="2007" name="J. Bacteriol.">
        <title>The complete genome sequence of Bacillus thuringiensis Al Hakam.</title>
        <authorList>
            <person name="Challacombe J.F."/>
            <person name="Altherr M.R."/>
            <person name="Xie G."/>
            <person name="Bhotika S.S."/>
            <person name="Brown N."/>
            <person name="Bruce D."/>
            <person name="Campbell C.S."/>
            <person name="Campbell M.L."/>
            <person name="Chen J."/>
            <person name="Chertkov O."/>
            <person name="Cleland C."/>
            <person name="Dimitrijevic M."/>
            <person name="Doggett N.A."/>
            <person name="Fawcett J.J."/>
            <person name="Glavina T."/>
            <person name="Goodwin L.A."/>
            <person name="Green L.D."/>
            <person name="Han C.S."/>
            <person name="Hill K.K."/>
            <person name="Hitchcock P."/>
            <person name="Jackson P.J."/>
            <person name="Keim P."/>
            <person name="Kewalramani A.R."/>
            <person name="Longmire J."/>
            <person name="Lucas S."/>
            <person name="Malfatti S."/>
            <person name="Martinez D."/>
            <person name="McMurry K."/>
            <person name="Meincke L.J."/>
            <person name="Misra M."/>
            <person name="Moseman B.L."/>
            <person name="Mundt M."/>
            <person name="Munk A.C."/>
            <person name="Okinaka R.T."/>
            <person name="Parson-Quintana B."/>
            <person name="Reilly L.P."/>
            <person name="Richardson P."/>
            <person name="Robinson D.L."/>
            <person name="Saunders E."/>
            <person name="Tapia R."/>
            <person name="Tesmer J.G."/>
            <person name="Thayer N."/>
            <person name="Thompson L.S."/>
            <person name="Tice H."/>
            <person name="Ticknor L.O."/>
            <person name="Wills P.L."/>
            <person name="Gilna P."/>
            <person name="Brettin T.S."/>
        </authorList>
    </citation>
    <scope>NUCLEOTIDE SEQUENCE [LARGE SCALE GENOMIC DNA]</scope>
    <source>
        <strain>Al Hakam</strain>
    </source>
</reference>
<name>DER_BACAH</name>
<feature type="chain" id="PRO_1000011559" description="GTPase Der">
    <location>
        <begin position="1"/>
        <end position="436"/>
    </location>
</feature>
<feature type="domain" description="EngA-type G 1">
    <location>
        <begin position="4"/>
        <end position="167"/>
    </location>
</feature>
<feature type="domain" description="EngA-type G 2">
    <location>
        <begin position="176"/>
        <end position="351"/>
    </location>
</feature>
<feature type="domain" description="KH-like" evidence="1">
    <location>
        <begin position="352"/>
        <end position="436"/>
    </location>
</feature>
<feature type="binding site" evidence="1">
    <location>
        <begin position="10"/>
        <end position="17"/>
    </location>
    <ligand>
        <name>GTP</name>
        <dbReference type="ChEBI" id="CHEBI:37565"/>
        <label>1</label>
    </ligand>
</feature>
<feature type="binding site" evidence="1">
    <location>
        <begin position="57"/>
        <end position="61"/>
    </location>
    <ligand>
        <name>GTP</name>
        <dbReference type="ChEBI" id="CHEBI:37565"/>
        <label>1</label>
    </ligand>
</feature>
<feature type="binding site" evidence="1">
    <location>
        <begin position="119"/>
        <end position="122"/>
    </location>
    <ligand>
        <name>GTP</name>
        <dbReference type="ChEBI" id="CHEBI:37565"/>
        <label>1</label>
    </ligand>
</feature>
<feature type="binding site" evidence="1">
    <location>
        <begin position="182"/>
        <end position="189"/>
    </location>
    <ligand>
        <name>GTP</name>
        <dbReference type="ChEBI" id="CHEBI:37565"/>
        <label>2</label>
    </ligand>
</feature>
<feature type="binding site" evidence="1">
    <location>
        <begin position="229"/>
        <end position="233"/>
    </location>
    <ligand>
        <name>GTP</name>
        <dbReference type="ChEBI" id="CHEBI:37565"/>
        <label>2</label>
    </ligand>
</feature>
<feature type="binding site" evidence="1">
    <location>
        <begin position="294"/>
        <end position="297"/>
    </location>
    <ligand>
        <name>GTP</name>
        <dbReference type="ChEBI" id="CHEBI:37565"/>
        <label>2</label>
    </ligand>
</feature>
<proteinExistence type="inferred from homology"/>
<dbReference type="EMBL" id="CP000485">
    <property type="protein sequence ID" value="ABK84702.1"/>
    <property type="molecule type" value="Genomic_DNA"/>
</dbReference>
<dbReference type="RefSeq" id="WP_001125893.1">
    <property type="nucleotide sequence ID" value="NC_008600.1"/>
</dbReference>
<dbReference type="SMR" id="A0RBV9"/>
<dbReference type="GeneID" id="93009536"/>
<dbReference type="KEGG" id="btl:BALH_1359"/>
<dbReference type="HOGENOM" id="CLU_016077_6_2_9"/>
<dbReference type="GO" id="GO:0005525">
    <property type="term" value="F:GTP binding"/>
    <property type="evidence" value="ECO:0007669"/>
    <property type="project" value="UniProtKB-UniRule"/>
</dbReference>
<dbReference type="GO" id="GO:0043022">
    <property type="term" value="F:ribosome binding"/>
    <property type="evidence" value="ECO:0007669"/>
    <property type="project" value="TreeGrafter"/>
</dbReference>
<dbReference type="GO" id="GO:0042254">
    <property type="term" value="P:ribosome biogenesis"/>
    <property type="evidence" value="ECO:0007669"/>
    <property type="project" value="UniProtKB-KW"/>
</dbReference>
<dbReference type="CDD" id="cd01894">
    <property type="entry name" value="EngA1"/>
    <property type="match status" value="1"/>
</dbReference>
<dbReference type="CDD" id="cd01895">
    <property type="entry name" value="EngA2"/>
    <property type="match status" value="1"/>
</dbReference>
<dbReference type="FunFam" id="3.30.300.20:FF:000004">
    <property type="entry name" value="GTPase Der"/>
    <property type="match status" value="1"/>
</dbReference>
<dbReference type="FunFam" id="3.40.50.300:FF:000040">
    <property type="entry name" value="GTPase Der"/>
    <property type="match status" value="1"/>
</dbReference>
<dbReference type="FunFam" id="3.40.50.300:FF:000057">
    <property type="entry name" value="GTPase Der"/>
    <property type="match status" value="1"/>
</dbReference>
<dbReference type="Gene3D" id="3.30.300.20">
    <property type="match status" value="1"/>
</dbReference>
<dbReference type="Gene3D" id="3.40.50.300">
    <property type="entry name" value="P-loop containing nucleotide triphosphate hydrolases"/>
    <property type="match status" value="2"/>
</dbReference>
<dbReference type="HAMAP" id="MF_00195">
    <property type="entry name" value="GTPase_Der"/>
    <property type="match status" value="1"/>
</dbReference>
<dbReference type="InterPro" id="IPR031166">
    <property type="entry name" value="G_ENGA"/>
</dbReference>
<dbReference type="InterPro" id="IPR006073">
    <property type="entry name" value="GTP-bd"/>
</dbReference>
<dbReference type="InterPro" id="IPR016484">
    <property type="entry name" value="GTPase_Der"/>
</dbReference>
<dbReference type="InterPro" id="IPR032859">
    <property type="entry name" value="KH_dom-like"/>
</dbReference>
<dbReference type="InterPro" id="IPR015946">
    <property type="entry name" value="KH_dom-like_a/b"/>
</dbReference>
<dbReference type="InterPro" id="IPR027417">
    <property type="entry name" value="P-loop_NTPase"/>
</dbReference>
<dbReference type="InterPro" id="IPR005225">
    <property type="entry name" value="Small_GTP-bd"/>
</dbReference>
<dbReference type="NCBIfam" id="TIGR03594">
    <property type="entry name" value="GTPase_EngA"/>
    <property type="match status" value="1"/>
</dbReference>
<dbReference type="NCBIfam" id="TIGR00231">
    <property type="entry name" value="small_GTP"/>
    <property type="match status" value="2"/>
</dbReference>
<dbReference type="PANTHER" id="PTHR43834">
    <property type="entry name" value="GTPASE DER"/>
    <property type="match status" value="1"/>
</dbReference>
<dbReference type="PANTHER" id="PTHR43834:SF6">
    <property type="entry name" value="GTPASE DER"/>
    <property type="match status" value="1"/>
</dbReference>
<dbReference type="Pfam" id="PF14714">
    <property type="entry name" value="KH_dom-like"/>
    <property type="match status" value="1"/>
</dbReference>
<dbReference type="Pfam" id="PF01926">
    <property type="entry name" value="MMR_HSR1"/>
    <property type="match status" value="2"/>
</dbReference>
<dbReference type="PIRSF" id="PIRSF006485">
    <property type="entry name" value="GTP-binding_EngA"/>
    <property type="match status" value="1"/>
</dbReference>
<dbReference type="PRINTS" id="PR00326">
    <property type="entry name" value="GTP1OBG"/>
</dbReference>
<dbReference type="SUPFAM" id="SSF52540">
    <property type="entry name" value="P-loop containing nucleoside triphosphate hydrolases"/>
    <property type="match status" value="2"/>
</dbReference>
<dbReference type="PROSITE" id="PS51712">
    <property type="entry name" value="G_ENGA"/>
    <property type="match status" value="2"/>
</dbReference>
<sequence length="436" mass="48618">MPKPVIAIVGRPNVGKSTIFNRIVGERVSIVEDIPGVTRDRIYSAGEWLNHEFNIIDTGGIDIGDEPFLTQIRQQAEVAIDEADVIIFMTNGRDGVTAADEEVAKILYRSNKPVVLAVNKVDNPEMRSDIYDFYALGFGEPFPISGTHGLGLGDLLDEAAQHFPKIEEDGYDEDTIRFSLIGRPNVGKSSLVNALLGQERVIVSNVAGTTRDAVDTPYSKDGKDYVIIDTAGMRKKGKVYESTEKYSVLRALRAIERSDVVLVVLDGEEGIIEQDKKIAGYAHDSGRAVVIVVNKWDAVKKDEKTMKAFEENIRAHFQFLEYAPIVFLSAKTRKRTQTLIPVIDEVNESHSIRIQTNVLNDVIMDAVAMNPTPTHNGSRLKIFYATQVAVKPPTFVVFVNDPELLHFSYERFLKNRLRESFGFVGTPIHIIARARD</sequence>
<gene>
    <name evidence="1" type="primary">der</name>
    <name type="synonym">engA</name>
    <name type="ordered locus">BALH_1359</name>
</gene>
<organism>
    <name type="scientific">Bacillus thuringiensis (strain Al Hakam)</name>
    <dbReference type="NCBI Taxonomy" id="412694"/>
    <lineage>
        <taxon>Bacteria</taxon>
        <taxon>Bacillati</taxon>
        <taxon>Bacillota</taxon>
        <taxon>Bacilli</taxon>
        <taxon>Bacillales</taxon>
        <taxon>Bacillaceae</taxon>
        <taxon>Bacillus</taxon>
        <taxon>Bacillus cereus group</taxon>
    </lineage>
</organism>
<protein>
    <recommendedName>
        <fullName evidence="1">GTPase Der</fullName>
    </recommendedName>
    <alternativeName>
        <fullName evidence="1">GTP-binding protein EngA</fullName>
    </alternativeName>
</protein>
<evidence type="ECO:0000255" key="1">
    <source>
        <dbReference type="HAMAP-Rule" id="MF_00195"/>
    </source>
</evidence>
<comment type="function">
    <text evidence="1">GTPase that plays an essential role in the late steps of ribosome biogenesis.</text>
</comment>
<comment type="subunit">
    <text evidence="1">Associates with the 50S ribosomal subunit.</text>
</comment>
<comment type="similarity">
    <text evidence="1">Belongs to the TRAFAC class TrmE-Era-EngA-EngB-Septin-like GTPase superfamily. EngA (Der) GTPase family.</text>
</comment>
<keyword id="KW-0342">GTP-binding</keyword>
<keyword id="KW-0547">Nucleotide-binding</keyword>
<keyword id="KW-0677">Repeat</keyword>
<keyword id="KW-0690">Ribosome biogenesis</keyword>
<accession>A0RBV9</accession>